<organism>
    <name type="scientific">Homo sapiens</name>
    <name type="common">Human</name>
    <dbReference type="NCBI Taxonomy" id="9606"/>
    <lineage>
        <taxon>Eukaryota</taxon>
        <taxon>Metazoa</taxon>
        <taxon>Chordata</taxon>
        <taxon>Craniata</taxon>
        <taxon>Vertebrata</taxon>
        <taxon>Euteleostomi</taxon>
        <taxon>Mammalia</taxon>
        <taxon>Eutheria</taxon>
        <taxon>Euarchontoglires</taxon>
        <taxon>Primates</taxon>
        <taxon>Haplorrhini</taxon>
        <taxon>Catarrhini</taxon>
        <taxon>Hominidae</taxon>
        <taxon>Homo</taxon>
    </lineage>
</organism>
<reference key="1">
    <citation type="journal article" date="2003" name="Genome Res.">
        <title>The secreted protein discovery initiative (SPDI), a large-scale effort to identify novel human secreted and transmembrane proteins: a bioinformatics assessment.</title>
        <authorList>
            <person name="Clark H.F."/>
            <person name="Gurney A.L."/>
            <person name="Abaya E."/>
            <person name="Baker K."/>
            <person name="Baldwin D.T."/>
            <person name="Brush J."/>
            <person name="Chen J."/>
            <person name="Chow B."/>
            <person name="Chui C."/>
            <person name="Crowley C."/>
            <person name="Currell B."/>
            <person name="Deuel B."/>
            <person name="Dowd P."/>
            <person name="Eaton D."/>
            <person name="Foster J.S."/>
            <person name="Grimaldi C."/>
            <person name="Gu Q."/>
            <person name="Hass P.E."/>
            <person name="Heldens S."/>
            <person name="Huang A."/>
            <person name="Kim H.S."/>
            <person name="Klimowski L."/>
            <person name="Jin Y."/>
            <person name="Johnson S."/>
            <person name="Lee J."/>
            <person name="Lewis L."/>
            <person name="Liao D."/>
            <person name="Mark M.R."/>
            <person name="Robbie E."/>
            <person name="Sanchez C."/>
            <person name="Schoenfeld J."/>
            <person name="Seshagiri S."/>
            <person name="Simmons L."/>
            <person name="Singh J."/>
            <person name="Smith V."/>
            <person name="Stinson J."/>
            <person name="Vagts A."/>
            <person name="Vandlen R.L."/>
            <person name="Watanabe C."/>
            <person name="Wieand D."/>
            <person name="Woods K."/>
            <person name="Xie M.-H."/>
            <person name="Yansura D.G."/>
            <person name="Yi S."/>
            <person name="Yu G."/>
            <person name="Yuan J."/>
            <person name="Zhang M."/>
            <person name="Zhang Z."/>
            <person name="Goddard A.D."/>
            <person name="Wood W.I."/>
            <person name="Godowski P.J."/>
            <person name="Gray A.M."/>
        </authorList>
    </citation>
    <scope>NUCLEOTIDE SEQUENCE [LARGE SCALE MRNA] (ISOFORM 2)</scope>
    <scope>VARIANT ALA-309</scope>
</reference>
<reference key="2">
    <citation type="submission" date="2003-09" db="EMBL/GenBank/DDBJ databases">
        <title>Photomedin-1 and -2, novel extracellular glycoproteins with olfactomedin domain, isolated from RIKEN full-length mouse cDNA clones by computational screening.</title>
        <authorList>
            <person name="Furutani Y."/>
            <person name="Manabe R."/>
            <person name="Tsutsui K."/>
            <person name="Yamada T."/>
            <person name="Sugimoto N."/>
            <person name="Kawai J."/>
            <person name="Hayashizaki Y."/>
            <person name="Sekiguchi K."/>
        </authorList>
    </citation>
    <scope>NUCLEOTIDE SEQUENCE [MRNA] (ISOFORM 1)</scope>
    <source>
        <tissue>Retina</tissue>
    </source>
</reference>
<reference key="3">
    <citation type="journal article" date="2004" name="Nature">
        <title>DNA sequence and analysis of human chromosome 9.</title>
        <authorList>
            <person name="Humphray S.J."/>
            <person name="Oliver K."/>
            <person name="Hunt A.R."/>
            <person name="Plumb R.W."/>
            <person name="Loveland J.E."/>
            <person name="Howe K.L."/>
            <person name="Andrews T.D."/>
            <person name="Searle S."/>
            <person name="Hunt S.E."/>
            <person name="Scott C.E."/>
            <person name="Jones M.C."/>
            <person name="Ainscough R."/>
            <person name="Almeida J.P."/>
            <person name="Ambrose K.D."/>
            <person name="Ashwell R.I.S."/>
            <person name="Babbage A.K."/>
            <person name="Babbage S."/>
            <person name="Bagguley C.L."/>
            <person name="Bailey J."/>
            <person name="Banerjee R."/>
            <person name="Barker D.J."/>
            <person name="Barlow K.F."/>
            <person name="Bates K."/>
            <person name="Beasley H."/>
            <person name="Beasley O."/>
            <person name="Bird C.P."/>
            <person name="Bray-Allen S."/>
            <person name="Brown A.J."/>
            <person name="Brown J.Y."/>
            <person name="Burford D."/>
            <person name="Burrill W."/>
            <person name="Burton J."/>
            <person name="Carder C."/>
            <person name="Carter N.P."/>
            <person name="Chapman J.C."/>
            <person name="Chen Y."/>
            <person name="Clarke G."/>
            <person name="Clark S.Y."/>
            <person name="Clee C.M."/>
            <person name="Clegg S."/>
            <person name="Collier R.E."/>
            <person name="Corby N."/>
            <person name="Crosier M."/>
            <person name="Cummings A.T."/>
            <person name="Davies J."/>
            <person name="Dhami P."/>
            <person name="Dunn M."/>
            <person name="Dutta I."/>
            <person name="Dyer L.W."/>
            <person name="Earthrowl M.E."/>
            <person name="Faulkner L."/>
            <person name="Fleming C.J."/>
            <person name="Frankish A."/>
            <person name="Frankland J.A."/>
            <person name="French L."/>
            <person name="Fricker D.G."/>
            <person name="Garner P."/>
            <person name="Garnett J."/>
            <person name="Ghori J."/>
            <person name="Gilbert J.G.R."/>
            <person name="Glison C."/>
            <person name="Grafham D.V."/>
            <person name="Gribble S."/>
            <person name="Griffiths C."/>
            <person name="Griffiths-Jones S."/>
            <person name="Grocock R."/>
            <person name="Guy J."/>
            <person name="Hall R.E."/>
            <person name="Hammond S."/>
            <person name="Harley J.L."/>
            <person name="Harrison E.S.I."/>
            <person name="Hart E.A."/>
            <person name="Heath P.D."/>
            <person name="Henderson C.D."/>
            <person name="Hopkins B.L."/>
            <person name="Howard P.J."/>
            <person name="Howden P.J."/>
            <person name="Huckle E."/>
            <person name="Johnson C."/>
            <person name="Johnson D."/>
            <person name="Joy A.A."/>
            <person name="Kay M."/>
            <person name="Keenan S."/>
            <person name="Kershaw J.K."/>
            <person name="Kimberley A.M."/>
            <person name="King A."/>
            <person name="Knights A."/>
            <person name="Laird G.K."/>
            <person name="Langford C."/>
            <person name="Lawlor S."/>
            <person name="Leongamornlert D.A."/>
            <person name="Leversha M."/>
            <person name="Lloyd C."/>
            <person name="Lloyd D.M."/>
            <person name="Lovell J."/>
            <person name="Martin S."/>
            <person name="Mashreghi-Mohammadi M."/>
            <person name="Matthews L."/>
            <person name="McLaren S."/>
            <person name="McLay K.E."/>
            <person name="McMurray A."/>
            <person name="Milne S."/>
            <person name="Nickerson T."/>
            <person name="Nisbett J."/>
            <person name="Nordsiek G."/>
            <person name="Pearce A.V."/>
            <person name="Peck A.I."/>
            <person name="Porter K.M."/>
            <person name="Pandian R."/>
            <person name="Pelan S."/>
            <person name="Phillimore B."/>
            <person name="Povey S."/>
            <person name="Ramsey Y."/>
            <person name="Rand V."/>
            <person name="Scharfe M."/>
            <person name="Sehra H.K."/>
            <person name="Shownkeen R."/>
            <person name="Sims S.K."/>
            <person name="Skuce C.D."/>
            <person name="Smith M."/>
            <person name="Steward C.A."/>
            <person name="Swarbreck D."/>
            <person name="Sycamore N."/>
            <person name="Tester J."/>
            <person name="Thorpe A."/>
            <person name="Tracey A."/>
            <person name="Tromans A."/>
            <person name="Thomas D.W."/>
            <person name="Wall M."/>
            <person name="Wallis J.M."/>
            <person name="West A.P."/>
            <person name="Whitehead S.L."/>
            <person name="Willey D.L."/>
            <person name="Williams S.A."/>
            <person name="Wilming L."/>
            <person name="Wray P.W."/>
            <person name="Young L."/>
            <person name="Ashurst J.L."/>
            <person name="Coulson A."/>
            <person name="Blocker H."/>
            <person name="Durbin R.M."/>
            <person name="Sulston J.E."/>
            <person name="Hubbard T."/>
            <person name="Jackson M.J."/>
            <person name="Bentley D.R."/>
            <person name="Beck S."/>
            <person name="Rogers J."/>
            <person name="Dunham I."/>
        </authorList>
    </citation>
    <scope>NUCLEOTIDE SEQUENCE [LARGE SCALE GENOMIC DNA]</scope>
</reference>
<reference key="4">
    <citation type="submission" date="2005-07" db="EMBL/GenBank/DDBJ databases">
        <authorList>
            <person name="Mural R.J."/>
            <person name="Istrail S."/>
            <person name="Sutton G.G."/>
            <person name="Florea L."/>
            <person name="Halpern A.L."/>
            <person name="Mobarry C.M."/>
            <person name="Lippert R."/>
            <person name="Walenz B."/>
            <person name="Shatkay H."/>
            <person name="Dew I."/>
            <person name="Miller J.R."/>
            <person name="Flanigan M.J."/>
            <person name="Edwards N.J."/>
            <person name="Bolanos R."/>
            <person name="Fasulo D."/>
            <person name="Halldorsson B.V."/>
            <person name="Hannenhalli S."/>
            <person name="Turner R."/>
            <person name="Yooseph S."/>
            <person name="Lu F."/>
            <person name="Nusskern D.R."/>
            <person name="Shue B.C."/>
            <person name="Zheng X.H."/>
            <person name="Zhong F."/>
            <person name="Delcher A.L."/>
            <person name="Huson D.H."/>
            <person name="Kravitz S.A."/>
            <person name="Mouchard L."/>
            <person name="Reinert K."/>
            <person name="Remington K.A."/>
            <person name="Clark A.G."/>
            <person name="Waterman M.S."/>
            <person name="Eichler E.E."/>
            <person name="Adams M.D."/>
            <person name="Hunkapiller M.W."/>
            <person name="Myers E.W."/>
            <person name="Venter J.C."/>
        </authorList>
    </citation>
    <scope>NUCLEOTIDE SEQUENCE [LARGE SCALE GENOMIC DNA]</scope>
</reference>
<reference key="5">
    <citation type="journal article" date="2004" name="Genome Res.">
        <title>The status, quality, and expansion of the NIH full-length cDNA project: the Mammalian Gene Collection (MGC).</title>
        <authorList>
            <consortium name="The MGC Project Team"/>
        </authorList>
    </citation>
    <scope>NUCLEOTIDE SEQUENCE [LARGE SCALE MRNA] (ISOFORM 3)</scope>
    <scope>VARIANT ALA-309</scope>
    <source>
        <tissue>Lymph</tissue>
    </source>
</reference>
<reference key="6">
    <citation type="journal article" date="2013" name="Kidney Int.">
        <title>Neuronal proteins are novel components of podocyte major processes and their expression in glomerular crescents supports their role in crescent formation.</title>
        <authorList>
            <person name="Sistani L."/>
            <person name="Rodriguez P.Q."/>
            <person name="Hultenby K."/>
            <person name="Uhlen M."/>
            <person name="Betsholtz C."/>
            <person name="Jalanko H."/>
            <person name="Tryggvason K."/>
            <person name="Wernerson A."/>
            <person name="Patrakka J."/>
        </authorList>
    </citation>
    <scope>TISSUE SPECIFICITY</scope>
    <scope>SUBCELLULAR LOCATION</scope>
    <scope>DEVELOPMENTAL STAGE</scope>
</reference>
<evidence type="ECO:0000250" key="1">
    <source>
        <dbReference type="UniProtKB" id="Q8BHP7"/>
    </source>
</evidence>
<evidence type="ECO:0000255" key="2"/>
<evidence type="ECO:0000255" key="3">
    <source>
        <dbReference type="PROSITE-ProRule" id="PRU00446"/>
    </source>
</evidence>
<evidence type="ECO:0000256" key="4">
    <source>
        <dbReference type="SAM" id="MobiDB-lite"/>
    </source>
</evidence>
<evidence type="ECO:0000269" key="5">
    <source>
    </source>
</evidence>
<evidence type="ECO:0000269" key="6">
    <source>
    </source>
</evidence>
<evidence type="ECO:0000269" key="7">
    <source>
    </source>
</evidence>
<evidence type="ECO:0000303" key="8">
    <source>
    </source>
</evidence>
<evidence type="ECO:0000303" key="9">
    <source>
    </source>
</evidence>
<dbReference type="EMBL" id="AY358185">
    <property type="protein sequence ID" value="AAQ88552.1"/>
    <property type="molecule type" value="mRNA"/>
</dbReference>
<dbReference type="EMBL" id="AB119055">
    <property type="protein sequence ID" value="BAD38864.1"/>
    <property type="molecule type" value="mRNA"/>
</dbReference>
<dbReference type="EMBL" id="AL354928">
    <property type="status" value="NOT_ANNOTATED_CDS"/>
    <property type="molecule type" value="Genomic_DNA"/>
</dbReference>
<dbReference type="EMBL" id="CH471090">
    <property type="protein sequence ID" value="EAW87596.1"/>
    <property type="molecule type" value="Genomic_DNA"/>
</dbReference>
<dbReference type="EMBL" id="BC054001">
    <property type="protein sequence ID" value="AAH54001.1"/>
    <property type="molecule type" value="mRNA"/>
</dbReference>
<dbReference type="CCDS" id="CCDS65129.1">
    <molecule id="Q68BL7-3"/>
</dbReference>
<dbReference type="CCDS" id="CCDS6857.2">
    <molecule id="Q68BL7-1"/>
</dbReference>
<dbReference type="RefSeq" id="NP_001269644.1">
    <molecule id="Q68BL7-3"/>
    <property type="nucleotide sequence ID" value="NM_001282715.2"/>
</dbReference>
<dbReference type="RefSeq" id="NP_872293.2">
    <molecule id="Q68BL7-1"/>
    <property type="nucleotide sequence ID" value="NM_182487.4"/>
</dbReference>
<dbReference type="SMR" id="Q68BL7"/>
<dbReference type="BioGRID" id="127983">
    <property type="interactions" value="16"/>
</dbReference>
<dbReference type="FunCoup" id="Q68BL7">
    <property type="interactions" value="286"/>
</dbReference>
<dbReference type="IntAct" id="Q68BL7">
    <property type="interactions" value="3"/>
</dbReference>
<dbReference type="STRING" id="9606.ENSP00000362682"/>
<dbReference type="GlyGen" id="Q68BL7">
    <property type="glycosylation" value="5 sites, 5 N-linked glycans (1 site), 1 O-linked glycan (2 sites)"/>
</dbReference>
<dbReference type="iPTMnet" id="Q68BL7"/>
<dbReference type="PhosphoSitePlus" id="Q68BL7"/>
<dbReference type="BioMuta" id="OLFML2A"/>
<dbReference type="DMDM" id="74748246"/>
<dbReference type="jPOST" id="Q68BL7"/>
<dbReference type="MassIVE" id="Q68BL7"/>
<dbReference type="PaxDb" id="9606-ENSP00000362682"/>
<dbReference type="PeptideAtlas" id="Q68BL7"/>
<dbReference type="ProteomicsDB" id="65996">
    <molecule id="Q68BL7-1"/>
</dbReference>
<dbReference type="ProteomicsDB" id="65997">
    <molecule id="Q68BL7-2"/>
</dbReference>
<dbReference type="ProteomicsDB" id="65998">
    <molecule id="Q68BL7-3"/>
</dbReference>
<dbReference type="Pumba" id="Q68BL7"/>
<dbReference type="Antibodypedia" id="16348">
    <property type="antibodies" value="147 antibodies from 24 providers"/>
</dbReference>
<dbReference type="DNASU" id="169611"/>
<dbReference type="Ensembl" id="ENST00000288815.5">
    <molecule id="Q68BL7-3"/>
    <property type="protein sequence ID" value="ENSP00000288815.5"/>
    <property type="gene ID" value="ENSG00000185585.20"/>
</dbReference>
<dbReference type="Ensembl" id="ENST00000373580.8">
    <molecule id="Q68BL7-1"/>
    <property type="protein sequence ID" value="ENSP00000362682.3"/>
    <property type="gene ID" value="ENSG00000185585.20"/>
</dbReference>
<dbReference type="GeneID" id="169611"/>
<dbReference type="KEGG" id="hsa:169611"/>
<dbReference type="MANE-Select" id="ENST00000373580.8">
    <property type="protein sequence ID" value="ENSP00000362682.3"/>
    <property type="RefSeq nucleotide sequence ID" value="NM_182487.4"/>
    <property type="RefSeq protein sequence ID" value="NP_872293.2"/>
</dbReference>
<dbReference type="UCSC" id="uc004bov.5">
    <molecule id="Q68BL7-1"/>
    <property type="organism name" value="human"/>
</dbReference>
<dbReference type="AGR" id="HGNC:27270"/>
<dbReference type="CTD" id="169611"/>
<dbReference type="DisGeNET" id="169611"/>
<dbReference type="GeneCards" id="OLFML2A"/>
<dbReference type="HGNC" id="HGNC:27270">
    <property type="gene designation" value="OLFML2A"/>
</dbReference>
<dbReference type="HPA" id="ENSG00000185585">
    <property type="expression patterns" value="Low tissue specificity"/>
</dbReference>
<dbReference type="MIM" id="615899">
    <property type="type" value="gene"/>
</dbReference>
<dbReference type="neXtProt" id="NX_Q68BL7"/>
<dbReference type="OpenTargets" id="ENSG00000185585"/>
<dbReference type="PharmGKB" id="PA134967883"/>
<dbReference type="VEuPathDB" id="HostDB:ENSG00000185585"/>
<dbReference type="eggNOG" id="KOG3545">
    <property type="taxonomic scope" value="Eukaryota"/>
</dbReference>
<dbReference type="GeneTree" id="ENSGT00940000157194"/>
<dbReference type="HOGENOM" id="CLU_024107_0_0_1"/>
<dbReference type="InParanoid" id="Q68BL7"/>
<dbReference type="OMA" id="KGTNKYG"/>
<dbReference type="OrthoDB" id="8626508at2759"/>
<dbReference type="PAN-GO" id="Q68BL7">
    <property type="GO annotations" value="2 GO annotations based on evolutionary models"/>
</dbReference>
<dbReference type="PhylomeDB" id="Q68BL7"/>
<dbReference type="TreeFam" id="TF351220"/>
<dbReference type="PathwayCommons" id="Q68BL7"/>
<dbReference type="SignaLink" id="Q68BL7"/>
<dbReference type="BioGRID-ORCS" id="169611">
    <property type="hits" value="19 hits in 1150 CRISPR screens"/>
</dbReference>
<dbReference type="ChiTaRS" id="OLFML2A">
    <property type="organism name" value="human"/>
</dbReference>
<dbReference type="GenomeRNAi" id="169611"/>
<dbReference type="Pharos" id="Q68BL7">
    <property type="development level" value="Tbio"/>
</dbReference>
<dbReference type="PRO" id="PR:Q68BL7"/>
<dbReference type="Proteomes" id="UP000005640">
    <property type="component" value="Chromosome 9"/>
</dbReference>
<dbReference type="RNAct" id="Q68BL7">
    <property type="molecule type" value="protein"/>
</dbReference>
<dbReference type="Bgee" id="ENSG00000185585">
    <property type="expression patterns" value="Expressed in dorsal root ganglion and 167 other cell types or tissues"/>
</dbReference>
<dbReference type="ExpressionAtlas" id="Q68BL7">
    <property type="expression patterns" value="baseline and differential"/>
</dbReference>
<dbReference type="GO" id="GO:0031012">
    <property type="term" value="C:extracellular matrix"/>
    <property type="evidence" value="ECO:0007669"/>
    <property type="project" value="Ensembl"/>
</dbReference>
<dbReference type="GO" id="GO:0005615">
    <property type="term" value="C:extracellular space"/>
    <property type="evidence" value="ECO:0000318"/>
    <property type="project" value="GO_Central"/>
</dbReference>
<dbReference type="GO" id="GO:0050840">
    <property type="term" value="F:extracellular matrix binding"/>
    <property type="evidence" value="ECO:0007669"/>
    <property type="project" value="Ensembl"/>
</dbReference>
<dbReference type="GO" id="GO:0042802">
    <property type="term" value="F:identical protein binding"/>
    <property type="evidence" value="ECO:0007669"/>
    <property type="project" value="Ensembl"/>
</dbReference>
<dbReference type="GO" id="GO:0030198">
    <property type="term" value="P:extracellular matrix organization"/>
    <property type="evidence" value="ECO:0007669"/>
    <property type="project" value="Ensembl"/>
</dbReference>
<dbReference type="GO" id="GO:0007165">
    <property type="term" value="P:signal transduction"/>
    <property type="evidence" value="ECO:0000318"/>
    <property type="project" value="GO_Central"/>
</dbReference>
<dbReference type="InterPro" id="IPR003112">
    <property type="entry name" value="Olfac-like_dom"/>
</dbReference>
<dbReference type="InterPro" id="IPR050605">
    <property type="entry name" value="Olfactomedin-like_domain"/>
</dbReference>
<dbReference type="PANTHER" id="PTHR23192:SF29">
    <property type="entry name" value="OLFACTOMEDIN-LIKE PROTEIN 2A"/>
    <property type="match status" value="1"/>
</dbReference>
<dbReference type="PANTHER" id="PTHR23192">
    <property type="entry name" value="OLFACTOMEDIN-RELATED"/>
    <property type="match status" value="1"/>
</dbReference>
<dbReference type="Pfam" id="PF02191">
    <property type="entry name" value="OLF"/>
    <property type="match status" value="1"/>
</dbReference>
<dbReference type="SMART" id="SM00284">
    <property type="entry name" value="OLF"/>
    <property type="match status" value="1"/>
</dbReference>
<dbReference type="PROSITE" id="PS51132">
    <property type="entry name" value="OLF"/>
    <property type="match status" value="1"/>
</dbReference>
<keyword id="KW-0025">Alternative splicing</keyword>
<keyword id="KW-0175">Coiled coil</keyword>
<keyword id="KW-1015">Disulfide bond</keyword>
<keyword id="KW-0325">Glycoprotein</keyword>
<keyword id="KW-1267">Proteomics identification</keyword>
<keyword id="KW-1185">Reference proteome</keyword>
<keyword id="KW-0964">Secreted</keyword>
<keyword id="KW-0732">Signal</keyword>
<sequence>MAAAALPPRPLLLLPLVLLLSGRPTRADSKVFGDLDQVRMTSEGSDCRCKCIMRPLSKDACSRVRSGRARVEDFYTVETVSSGTDCRCSCTAPPSSLNPCENEWKMEKLKKQAPELLKLQSMVDLLEGTLYSMDLMKVHAYVHKVASQMNTLEESIKANLSRENEVVKDSVRHLSEQLRHYENHSAIMLGIKKELSRLGLQLLQKDAAAAPATPATGTGSKAQDTARGKGKDISKYGSVQKSFADRGLPKPPKEKLLQVEKLRKESGKGSFLQPTAKPRALAQQQAVIRGFTYYKAGKQEVTEAVADNTLQGTSWLEQLPPKVEGRSNSAEPNSAEQDEAEPRSSERVDLASGTPTSIPATTTTATTTPTPTTSLLPTEPPSGPEVSSQGREASCEGTLRAVDPPVRHHSYGRHEGAWMKDPAARDDRIYVTNYYYGNSLVEFRNLENFKQGRWSNMYKLPYNWIGTGHVVYQGAFYYNRAFTKNIIKYDLRQRFVASWALLPDVVYEDTTPWKWRGHSDIDFAVDESGLWVIYPAVDDRDEAQPEVIVLSRLDPGDLSVHRETTWKTRLRRNSYGNCFLVCGILYAVDTYNQQEGQVAYAFDTHTGTDARPQLPFLNEHAYTTQIDYNPKERVLYAWDNGHQLTYTLHFVV</sequence>
<name>OLM2A_HUMAN</name>
<proteinExistence type="evidence at protein level"/>
<comment type="subunit">
    <text evidence="1">Homodimer. Binds to heparin and chondroitin sulfate E.</text>
</comment>
<comment type="subcellular location">
    <subcellularLocation>
        <location evidence="1">Secreted</location>
    </subcellularLocation>
    <text evidence="7">Localizes to the podocyte major processes. Colocalized with the major process protein VIM throughout podocyte development.</text>
</comment>
<comment type="alternative products">
    <event type="alternative splicing"/>
    <isoform>
        <id>Q68BL7-1</id>
        <name>1</name>
        <sequence type="displayed"/>
    </isoform>
    <isoform>
        <id>Q68BL7-2</id>
        <name>2</name>
        <sequence type="described" ref="VSP_029566"/>
    </isoform>
    <isoform>
        <id>Q68BL7-3</id>
        <name>3</name>
        <sequence type="described" ref="VSP_029565 VSP_029567"/>
    </isoform>
</comment>
<comment type="tissue specificity">
    <text evidence="7">In the kidney expressed only by podocytes, wherein they localize to major processes.</text>
</comment>
<comment type="developmental stage">
    <text evidence="7">Detected at the vesicle stage of developing glomeruli, expressed in invading endothelial cells in the glomerular cleft at the S-shaped stage and is later expressed only at the basal aspect of maturing podocytes.</text>
</comment>
<comment type="PTM">
    <text evidence="1">May be cleaved at Lys-295 after secretion.</text>
</comment>
<comment type="PTM">
    <text evidence="1">O-glycosylated but not N-glycosylated.</text>
</comment>
<feature type="signal peptide" evidence="1">
    <location>
        <begin position="1"/>
        <end position="27"/>
    </location>
</feature>
<feature type="chain" id="PRO_0000311428" description="Olfactomedin-like protein 2A">
    <location>
        <begin position="28"/>
        <end position="652"/>
    </location>
</feature>
<feature type="domain" description="Olfactomedin-like" evidence="3">
    <location>
        <begin position="394"/>
        <end position="652"/>
    </location>
</feature>
<feature type="region of interest" description="Disordered" evidence="4">
    <location>
        <begin position="209"/>
        <end position="254"/>
    </location>
</feature>
<feature type="region of interest" description="Disordered" evidence="4">
    <location>
        <begin position="312"/>
        <end position="407"/>
    </location>
</feature>
<feature type="coiled-coil region" evidence="2">
    <location>
        <begin position="157"/>
        <end position="183"/>
    </location>
</feature>
<feature type="compositionally biased region" description="Low complexity" evidence="4">
    <location>
        <begin position="209"/>
        <end position="219"/>
    </location>
</feature>
<feature type="compositionally biased region" description="Basic and acidic residues" evidence="4">
    <location>
        <begin position="224"/>
        <end position="234"/>
    </location>
</feature>
<feature type="compositionally biased region" description="Basic and acidic residues" evidence="4">
    <location>
        <begin position="243"/>
        <end position="254"/>
    </location>
</feature>
<feature type="compositionally biased region" description="Polar residues" evidence="4">
    <location>
        <begin position="326"/>
        <end position="335"/>
    </location>
</feature>
<feature type="compositionally biased region" description="Basic and acidic residues" evidence="4">
    <location>
        <begin position="340"/>
        <end position="349"/>
    </location>
</feature>
<feature type="compositionally biased region" description="Low complexity" evidence="4">
    <location>
        <begin position="352"/>
        <end position="377"/>
    </location>
</feature>
<feature type="site" description="Cleavage" evidence="1">
    <location>
        <begin position="294"/>
        <end position="295"/>
    </location>
</feature>
<feature type="disulfide bond" evidence="3">
    <location>
        <begin position="395"/>
        <end position="582"/>
    </location>
</feature>
<feature type="splice variant" id="VSP_029565" description="In isoform 3." evidence="9">
    <location>
        <begin position="1"/>
        <end position="214"/>
    </location>
</feature>
<feature type="splice variant" id="VSP_029566" description="In isoform 2." evidence="8">
    <location>
        <begin position="1"/>
        <end position="39"/>
    </location>
</feature>
<feature type="splice variant" id="VSP_029567" description="In isoform 3." evidence="9">
    <original>ATGTGSKAQ</original>
    <variation>MSKRDKAGK</variation>
    <location>
        <begin position="215"/>
        <end position="223"/>
    </location>
</feature>
<feature type="sequence variant" id="VAR_037250" description="In dbSNP:rs7874348." evidence="5 6">
    <original>T</original>
    <variation>A</variation>
    <location>
        <position position="309"/>
    </location>
</feature>
<feature type="sequence variant" id="VAR_037251" description="In dbSNP:rs16927649.">
    <original>R</original>
    <variation>Q</variation>
    <location>
        <position position="425"/>
    </location>
</feature>
<protein>
    <recommendedName>
        <fullName>Olfactomedin-like protein 2A</fullName>
    </recommendedName>
    <alternativeName>
        <fullName>Photomedin-1</fullName>
    </alternativeName>
</protein>
<accession>Q68BL7</accession>
<accession>Q5JTM5</accession>
<accession>Q5JTM6</accession>
<accession>Q6UXW1</accession>
<accession>Q7Z5V3</accession>
<gene>
    <name type="primary">OLFML2A</name>
    <name type="ORF">UNQ9394/PRO34319</name>
</gene>